<reference key="1">
    <citation type="journal article" date="1997" name="Nature">
        <title>The complete genome sequence of the gastric pathogen Helicobacter pylori.</title>
        <authorList>
            <person name="Tomb J.-F."/>
            <person name="White O."/>
            <person name="Kerlavage A.R."/>
            <person name="Clayton R.A."/>
            <person name="Sutton G.G."/>
            <person name="Fleischmann R.D."/>
            <person name="Ketchum K.A."/>
            <person name="Klenk H.-P."/>
            <person name="Gill S.R."/>
            <person name="Dougherty B.A."/>
            <person name="Nelson K.E."/>
            <person name="Quackenbush J."/>
            <person name="Zhou L."/>
            <person name="Kirkness E.F."/>
            <person name="Peterson S.N."/>
            <person name="Loftus B.J."/>
            <person name="Richardson D.L."/>
            <person name="Dodson R.J."/>
            <person name="Khalak H.G."/>
            <person name="Glodek A."/>
            <person name="McKenney K."/>
            <person name="FitzGerald L.M."/>
            <person name="Lee N."/>
            <person name="Adams M.D."/>
            <person name="Hickey E.K."/>
            <person name="Berg D.E."/>
            <person name="Gocayne J.D."/>
            <person name="Utterback T.R."/>
            <person name="Peterson J.D."/>
            <person name="Kelley J.M."/>
            <person name="Cotton M.D."/>
            <person name="Weidman J.F."/>
            <person name="Fujii C."/>
            <person name="Bowman C."/>
            <person name="Watthey L."/>
            <person name="Wallin E."/>
            <person name="Hayes W.S."/>
            <person name="Borodovsky M."/>
            <person name="Karp P.D."/>
            <person name="Smith H.O."/>
            <person name="Fraser C.M."/>
            <person name="Venter J.C."/>
        </authorList>
    </citation>
    <scope>NUCLEOTIDE SEQUENCE [LARGE SCALE GENOMIC DNA]</scope>
    <source>
        <strain>ATCC 700392 / 26695</strain>
    </source>
</reference>
<name>MOBA_HELPY</name>
<sequence length="201" mass="23011">MKNPIIDNIPCVLLAGGKSSRFITNNIQTNKALMPLKSYSSLLEYQYTRLLKLFKKVIISTKKSYELNAPYLLEKESDLFSPLFGIHNAFLTLQTPYIFFIPIDTPLVSFESIKALCGIKNFSVTYAKSPTKEHYLISLWHQNTLNALIYALKTQNYRLSDLVKNTSSVAINFDKEEEFLNLNTLKDYELAVQILKKRANG</sequence>
<proteinExistence type="inferred from homology"/>
<feature type="chain" id="PRO_0000134892" description="Molybdenum cofactor guanylyltransferase">
    <location>
        <begin position="1"/>
        <end position="201"/>
    </location>
</feature>
<feature type="binding site" evidence="1">
    <location>
        <begin position="14"/>
        <end position="16"/>
    </location>
    <ligand>
        <name>GTP</name>
        <dbReference type="ChEBI" id="CHEBI:37565"/>
    </ligand>
</feature>
<feature type="binding site" evidence="1">
    <location>
        <position position="31"/>
    </location>
    <ligand>
        <name>GTP</name>
        <dbReference type="ChEBI" id="CHEBI:37565"/>
    </ligand>
</feature>
<feature type="binding site" evidence="1">
    <location>
        <position position="104"/>
    </location>
    <ligand>
        <name>GTP</name>
        <dbReference type="ChEBI" id="CHEBI:37565"/>
    </ligand>
</feature>
<feature type="binding site" evidence="1">
    <location>
        <position position="104"/>
    </location>
    <ligand>
        <name>Mg(2+)</name>
        <dbReference type="ChEBI" id="CHEBI:18420"/>
    </ligand>
</feature>
<keyword id="KW-0963">Cytoplasm</keyword>
<keyword id="KW-0342">GTP-binding</keyword>
<keyword id="KW-0460">Magnesium</keyword>
<keyword id="KW-0479">Metal-binding</keyword>
<keyword id="KW-0501">Molybdenum cofactor biosynthesis</keyword>
<keyword id="KW-0547">Nucleotide-binding</keyword>
<keyword id="KW-1185">Reference proteome</keyword>
<keyword id="KW-0808">Transferase</keyword>
<organism>
    <name type="scientific">Helicobacter pylori (strain ATCC 700392 / 26695)</name>
    <name type="common">Campylobacter pylori</name>
    <dbReference type="NCBI Taxonomy" id="85962"/>
    <lineage>
        <taxon>Bacteria</taxon>
        <taxon>Pseudomonadati</taxon>
        <taxon>Campylobacterota</taxon>
        <taxon>Epsilonproteobacteria</taxon>
        <taxon>Campylobacterales</taxon>
        <taxon>Helicobacteraceae</taxon>
        <taxon>Helicobacter</taxon>
    </lineage>
</organism>
<gene>
    <name evidence="1" type="primary">mobA</name>
    <name type="ordered locus">HP_0769</name>
</gene>
<comment type="function">
    <text evidence="1">Transfers a GMP moiety from GTP to Mo-molybdopterin (Mo-MPT) cofactor (Moco or molybdenum cofactor) to form Mo-molybdopterin guanine dinucleotide (Mo-MGD) cofactor.</text>
</comment>
<comment type="catalytic activity">
    <reaction evidence="1">
        <text>Mo-molybdopterin + GTP + H(+) = Mo-molybdopterin guanine dinucleotide + diphosphate</text>
        <dbReference type="Rhea" id="RHEA:34243"/>
        <dbReference type="ChEBI" id="CHEBI:15378"/>
        <dbReference type="ChEBI" id="CHEBI:33019"/>
        <dbReference type="ChEBI" id="CHEBI:37565"/>
        <dbReference type="ChEBI" id="CHEBI:71302"/>
        <dbReference type="ChEBI" id="CHEBI:71310"/>
        <dbReference type="EC" id="2.7.7.77"/>
    </reaction>
</comment>
<comment type="cofactor">
    <cofactor evidence="1">
        <name>Mg(2+)</name>
        <dbReference type="ChEBI" id="CHEBI:18420"/>
    </cofactor>
</comment>
<comment type="subunit">
    <text evidence="1">Monomer.</text>
</comment>
<comment type="subcellular location">
    <subcellularLocation>
        <location evidence="1">Cytoplasm</location>
    </subcellularLocation>
</comment>
<comment type="domain">
    <text evidence="1">The N-terminal domain determines nucleotide recognition and specific binding, while the C-terminal domain determines the specific binding to the target protein.</text>
</comment>
<comment type="similarity">
    <text evidence="1">Belongs to the MobA family.</text>
</comment>
<protein>
    <recommendedName>
        <fullName evidence="1">Molybdenum cofactor guanylyltransferase</fullName>
        <shortName evidence="1">MoCo guanylyltransferase</shortName>
        <ecNumber evidence="1">2.7.7.77</ecNumber>
    </recommendedName>
    <alternativeName>
        <fullName evidence="1">GTP:molybdopterin guanylyltransferase</fullName>
    </alternativeName>
    <alternativeName>
        <fullName evidence="1">Mo-MPT guanylyltransferase</fullName>
    </alternativeName>
    <alternativeName>
        <fullName evidence="1">Molybdopterin guanylyltransferase</fullName>
    </alternativeName>
    <alternativeName>
        <fullName evidence="1">Molybdopterin-guanine dinucleotide synthase</fullName>
        <shortName evidence="1">MGD synthase</shortName>
    </alternativeName>
</protein>
<accession>P56415</accession>
<evidence type="ECO:0000255" key="1">
    <source>
        <dbReference type="HAMAP-Rule" id="MF_00316"/>
    </source>
</evidence>
<dbReference type="EC" id="2.7.7.77" evidence="1"/>
<dbReference type="EMBL" id="AE000511">
    <property type="protein sequence ID" value="AAD07818.1"/>
    <property type="molecule type" value="Genomic_DNA"/>
</dbReference>
<dbReference type="PIR" id="A64616">
    <property type="entry name" value="A64616"/>
</dbReference>
<dbReference type="RefSeq" id="NP_207562.1">
    <property type="nucleotide sequence ID" value="NC_000915.1"/>
</dbReference>
<dbReference type="RefSeq" id="WP_000795288.1">
    <property type="nucleotide sequence ID" value="NC_018939.1"/>
</dbReference>
<dbReference type="SMR" id="P56415"/>
<dbReference type="DIP" id="DIP-3751N"/>
<dbReference type="IntAct" id="P56415">
    <property type="interactions" value="2"/>
</dbReference>
<dbReference type="MINT" id="P56415"/>
<dbReference type="STRING" id="85962.HP_0769"/>
<dbReference type="PaxDb" id="85962-C694_03950"/>
<dbReference type="EnsemblBacteria" id="AAD07818">
    <property type="protein sequence ID" value="AAD07818"/>
    <property type="gene ID" value="HP_0769"/>
</dbReference>
<dbReference type="KEGG" id="heo:C694_03950"/>
<dbReference type="KEGG" id="hpy:HP_0769"/>
<dbReference type="PATRIC" id="fig|85962.47.peg.821"/>
<dbReference type="eggNOG" id="COG0746">
    <property type="taxonomic scope" value="Bacteria"/>
</dbReference>
<dbReference type="InParanoid" id="P56415"/>
<dbReference type="OrthoDB" id="9788394at2"/>
<dbReference type="PhylomeDB" id="P56415"/>
<dbReference type="Proteomes" id="UP000000429">
    <property type="component" value="Chromosome"/>
</dbReference>
<dbReference type="GO" id="GO:0005737">
    <property type="term" value="C:cytoplasm"/>
    <property type="evidence" value="ECO:0007669"/>
    <property type="project" value="UniProtKB-SubCell"/>
</dbReference>
<dbReference type="GO" id="GO:0005525">
    <property type="term" value="F:GTP binding"/>
    <property type="evidence" value="ECO:0007669"/>
    <property type="project" value="UniProtKB-UniRule"/>
</dbReference>
<dbReference type="GO" id="GO:0046872">
    <property type="term" value="F:metal ion binding"/>
    <property type="evidence" value="ECO:0007669"/>
    <property type="project" value="UniProtKB-KW"/>
</dbReference>
<dbReference type="GO" id="GO:0061603">
    <property type="term" value="F:molybdenum cofactor guanylyltransferase activity"/>
    <property type="evidence" value="ECO:0007669"/>
    <property type="project" value="UniProtKB-EC"/>
</dbReference>
<dbReference type="GO" id="GO:0016779">
    <property type="term" value="F:nucleotidyltransferase activity"/>
    <property type="evidence" value="ECO:0000318"/>
    <property type="project" value="GO_Central"/>
</dbReference>
<dbReference type="GO" id="GO:1902758">
    <property type="term" value="P:bis(molybdopterin guanine dinucleotide)molybdenum biosynthetic process"/>
    <property type="evidence" value="ECO:0000318"/>
    <property type="project" value="GO_Central"/>
</dbReference>
<dbReference type="CDD" id="cd02503">
    <property type="entry name" value="MobA"/>
    <property type="match status" value="1"/>
</dbReference>
<dbReference type="Gene3D" id="3.90.550.10">
    <property type="entry name" value="Spore Coat Polysaccharide Biosynthesis Protein SpsA, Chain A"/>
    <property type="match status" value="1"/>
</dbReference>
<dbReference type="HAMAP" id="MF_00316">
    <property type="entry name" value="MobA"/>
    <property type="match status" value="1"/>
</dbReference>
<dbReference type="InterPro" id="IPR025877">
    <property type="entry name" value="MobA-like_NTP_Trfase"/>
</dbReference>
<dbReference type="InterPro" id="IPR013482">
    <property type="entry name" value="Molybde_CF_guanTrfase"/>
</dbReference>
<dbReference type="InterPro" id="IPR029044">
    <property type="entry name" value="Nucleotide-diphossugar_trans"/>
</dbReference>
<dbReference type="NCBIfam" id="NF001837">
    <property type="entry name" value="PRK00560.1"/>
    <property type="match status" value="1"/>
</dbReference>
<dbReference type="PANTHER" id="PTHR19136">
    <property type="entry name" value="MOLYBDENUM COFACTOR GUANYLYLTRANSFERASE"/>
    <property type="match status" value="1"/>
</dbReference>
<dbReference type="PANTHER" id="PTHR19136:SF81">
    <property type="entry name" value="MOLYBDENUM COFACTOR GUANYLYLTRANSFERASE"/>
    <property type="match status" value="1"/>
</dbReference>
<dbReference type="Pfam" id="PF12804">
    <property type="entry name" value="NTP_transf_3"/>
    <property type="match status" value="1"/>
</dbReference>
<dbReference type="SUPFAM" id="SSF53448">
    <property type="entry name" value="Nucleotide-diphospho-sugar transferases"/>
    <property type="match status" value="1"/>
</dbReference>